<name>FNDC5_RAT</name>
<accession>Q8K3V5</accession>
<accession>A0A8L2QNJ9</accession>
<comment type="function">
    <molecule>Irisin</molecule>
    <text evidence="1">Mediates beneficial effects of muscular exercise. Induces browning of white adipose tissue by stimulating UCP1 expression, at least in part, via the nuclear receptor PPARA.</text>
</comment>
<comment type="subunit">
    <molecule>Irisin</molecule>
    <text evidence="2">Dimer; may exist in other oligomeric forms.</text>
</comment>
<comment type="subcellular location">
    <molecule>Fibronectin type III domain-containing protein 5</molecule>
    <subcellularLocation>
        <location evidence="2">Cell membrane</location>
        <topology evidence="3">Single-pass membrane protein</topology>
    </subcellularLocation>
    <subcellularLocation>
        <location evidence="1">Peroxisome membrane</location>
        <topology evidence="3">Single-pass membrane protein</topology>
    </subcellularLocation>
    <text evidence="1">Imported into peroxisomes through the PEX5 receptor pathway.</text>
</comment>
<comment type="subcellular location">
    <molecule>Irisin</molecule>
    <subcellularLocation>
        <location evidence="2">Secreted</location>
    </subcellularLocation>
    <text evidence="2">Detected in plasma following endurance exercise.</text>
</comment>
<comment type="alternative products">
    <event type="alternative promoter"/>
    <isoform>
        <id>Q8K3V5-2</id>
        <name>1</name>
        <sequence type="displayed"/>
    </isoform>
    <isoform>
        <id>Q8K3V5-1</id>
        <name>2</name>
        <sequence type="described" ref="VSP_062504"/>
    </isoform>
</comment>
<comment type="domain">
    <text evidence="2">Fibronectin type-III domain is capable of forming a continuous intersubunit beta-sheet dimer; dimerization may thereby play a role in cell-cell adhesion or signaling.</text>
</comment>
<comment type="PTM">
    <text evidence="1">N-Glycosylated.</text>
</comment>
<comment type="PTM">
    <text evidence="1">The extracellular domain is cleaved and released from the cell membrane.</text>
</comment>
<proteinExistence type="evidence at transcript level"/>
<sequence length="240" mass="26442">MQAARGGAGRPGREGRGLERECERSPGVGAAMPPGPCAWPPRAALRLWLGCVCFALVQADSPSAPVNVTVRHLKANSAVVSWDVLEDEVVIGFAISQQKKDVRMLRFIQEVNTTTRSCALWDLEEDTEYIVHVQAISIQGQSPASEPVLFKTPREAEKMASKNKDEVTMKEMGRNQQLRTGEVLIIVVVLFMWAGVIALFCRQYDIIKDNEPNNNKEKTKSASETSTPEHQGGGLLRSKI</sequence>
<feature type="chain" id="PRO_0000328973" description="Fibronectin type III domain-containing protein 5">
    <location>
        <begin position="1"/>
        <end position="240"/>
    </location>
</feature>
<feature type="chain" id="PRO_0000415859" description="Irisin">
    <location>
        <begin position="1"/>
        <end position="171"/>
    </location>
</feature>
<feature type="transmembrane region" description="Helical" evidence="3">
    <location>
        <begin position="181"/>
        <end position="201"/>
    </location>
</feature>
<feature type="domain" description="Fibronectin type-III" evidence="4">
    <location>
        <begin position="64"/>
        <end position="155"/>
    </location>
</feature>
<feature type="region of interest" description="Disordered" evidence="5">
    <location>
        <begin position="1"/>
        <end position="30"/>
    </location>
</feature>
<feature type="region of interest" description="Disordered" evidence="5">
    <location>
        <begin position="210"/>
        <end position="240"/>
    </location>
</feature>
<feature type="short sequence motif" description="Microbody targeting signal" evidence="3">
    <location>
        <begin position="238"/>
        <end position="240"/>
    </location>
</feature>
<feature type="compositionally biased region" description="Gly residues" evidence="5">
    <location>
        <begin position="1"/>
        <end position="10"/>
    </location>
</feature>
<feature type="compositionally biased region" description="Basic and acidic residues" evidence="5">
    <location>
        <begin position="11"/>
        <end position="24"/>
    </location>
</feature>
<feature type="compositionally biased region" description="Basic and acidic residues" evidence="5">
    <location>
        <begin position="210"/>
        <end position="221"/>
    </location>
</feature>
<feature type="compositionally biased region" description="Gly residues" evidence="5">
    <location>
        <begin position="231"/>
        <end position="240"/>
    </location>
</feature>
<feature type="site" description="Required for dimerization" evidence="2">
    <location>
        <position position="106"/>
    </location>
</feature>
<feature type="glycosylation site" description="N-linked (GlcNAc...) asparagine" evidence="3">
    <location>
        <position position="67"/>
    </location>
</feature>
<feature type="glycosylation site" description="N-linked (GlcNAc...) asparagine" evidence="3">
    <location>
        <position position="112"/>
    </location>
</feature>
<feature type="splice variant" id="VSP_062504" description="In isoform 2." evidence="6">
    <location>
        <begin position="1"/>
        <end position="31"/>
    </location>
</feature>
<dbReference type="EMBL" id="AABR03042295">
    <property type="status" value="NOT_ANNOTATED_CDS"/>
    <property type="molecule type" value="Genomic_DNA"/>
</dbReference>
<dbReference type="EMBL" id="AABR03047757">
    <property type="status" value="NOT_ANNOTATED_CDS"/>
    <property type="molecule type" value="Genomic_DNA"/>
</dbReference>
<dbReference type="EMBL" id="AF529211">
    <property type="protein sequence ID" value="AAM94408.1"/>
    <property type="molecule type" value="mRNA"/>
</dbReference>
<dbReference type="RefSeq" id="NP_001257910.1">
    <molecule id="Q8K3V5-1"/>
    <property type="nucleotide sequence ID" value="NM_001270981.4"/>
</dbReference>
<dbReference type="RefSeq" id="XP_038965257.1">
    <molecule id="Q8K3V5-2"/>
    <property type="nucleotide sequence ID" value="XM_039109329.2"/>
</dbReference>
<dbReference type="FunCoup" id="Q8K3V5">
    <property type="interactions" value="40"/>
</dbReference>
<dbReference type="STRING" id="10116.ENSRNOP00000048830"/>
<dbReference type="GlyCosmos" id="Q8K3V5">
    <property type="glycosylation" value="2 sites, No reported glycans"/>
</dbReference>
<dbReference type="GlyGen" id="Q8K3V5">
    <property type="glycosylation" value="2 sites"/>
</dbReference>
<dbReference type="iPTMnet" id="Q8K3V5"/>
<dbReference type="PhosphoSitePlus" id="Q8K3V5"/>
<dbReference type="PaxDb" id="10116-ENSRNOP00000048830"/>
<dbReference type="Ensembl" id="ENSRNOT00000047152.6">
    <molecule id="Q8K3V5-2"/>
    <property type="protein sequence ID" value="ENSRNOP00000048830.6"/>
    <property type="gene ID" value="ENSRNOG00000030238.6"/>
</dbReference>
<dbReference type="Ensembl" id="ENSRNOT00055047410">
    <molecule id="Q8K3V5-2"/>
    <property type="protein sequence ID" value="ENSRNOP00055038990"/>
    <property type="gene ID" value="ENSRNOG00055027393"/>
</dbReference>
<dbReference type="Ensembl" id="ENSRNOT00060036102">
    <molecule id="Q8K3V5-2"/>
    <property type="protein sequence ID" value="ENSRNOP00060029687"/>
    <property type="gene ID" value="ENSRNOG00060020839"/>
</dbReference>
<dbReference type="Ensembl" id="ENSRNOT00065040257">
    <molecule id="Q8K3V5-2"/>
    <property type="protein sequence ID" value="ENSRNOP00065032758"/>
    <property type="gene ID" value="ENSRNOG00065023534"/>
</dbReference>
<dbReference type="GeneID" id="260327"/>
<dbReference type="KEGG" id="rno:260327"/>
<dbReference type="AGR" id="RGD:708525"/>
<dbReference type="CTD" id="252995"/>
<dbReference type="RGD" id="708525">
    <property type="gene designation" value="Fndc5"/>
</dbReference>
<dbReference type="VEuPathDB" id="HostDB:ENSRNOG00000030238"/>
<dbReference type="eggNOG" id="ENOG502QQCU">
    <property type="taxonomic scope" value="Eukaryota"/>
</dbReference>
<dbReference type="GeneTree" id="ENSGT00390000004923"/>
<dbReference type="HOGENOM" id="CLU_089166_1_0_1"/>
<dbReference type="InParanoid" id="Q8K3V5"/>
<dbReference type="OMA" id="YFSCASL"/>
<dbReference type="OrthoDB" id="5843172at2759"/>
<dbReference type="PhylomeDB" id="Q8K3V5"/>
<dbReference type="TreeFam" id="TF325415"/>
<dbReference type="PRO" id="PR:Q8K3V5"/>
<dbReference type="Proteomes" id="UP000002494">
    <property type="component" value="Chromosome 5"/>
</dbReference>
<dbReference type="Bgee" id="ENSRNOG00000030238">
    <property type="expression patterns" value="Expressed in heart and 20 other cell types or tissues"/>
</dbReference>
<dbReference type="GO" id="GO:0005783">
    <property type="term" value="C:endoplasmic reticulum"/>
    <property type="evidence" value="ECO:0000266"/>
    <property type="project" value="RGD"/>
</dbReference>
<dbReference type="GO" id="GO:0005576">
    <property type="term" value="C:extracellular region"/>
    <property type="evidence" value="ECO:0000250"/>
    <property type="project" value="UniProtKB"/>
</dbReference>
<dbReference type="GO" id="GO:0005778">
    <property type="term" value="C:peroxisomal membrane"/>
    <property type="evidence" value="ECO:0007669"/>
    <property type="project" value="UniProtKB-SubCell"/>
</dbReference>
<dbReference type="GO" id="GO:0005886">
    <property type="term" value="C:plasma membrane"/>
    <property type="evidence" value="ECO:0000266"/>
    <property type="project" value="RGD"/>
</dbReference>
<dbReference type="GO" id="GO:0005179">
    <property type="term" value="F:hormone activity"/>
    <property type="evidence" value="ECO:0007669"/>
    <property type="project" value="UniProtKB-KW"/>
</dbReference>
<dbReference type="GO" id="GO:0090336">
    <property type="term" value="P:positive regulation of brown fat cell differentiation"/>
    <property type="evidence" value="ECO:0000250"/>
    <property type="project" value="UniProtKB"/>
</dbReference>
<dbReference type="GO" id="GO:0014850">
    <property type="term" value="P:response to muscle activity"/>
    <property type="evidence" value="ECO:0000250"/>
    <property type="project" value="UniProtKB"/>
</dbReference>
<dbReference type="CDD" id="cd00063">
    <property type="entry name" value="FN3"/>
    <property type="match status" value="1"/>
</dbReference>
<dbReference type="FunFam" id="2.60.40.10:FF:000117">
    <property type="entry name" value="Fibronectin type III domain containing 5"/>
    <property type="match status" value="1"/>
</dbReference>
<dbReference type="Gene3D" id="2.60.40.10">
    <property type="entry name" value="Immunoglobulins"/>
    <property type="match status" value="1"/>
</dbReference>
<dbReference type="InterPro" id="IPR003961">
    <property type="entry name" value="FN3_dom"/>
</dbReference>
<dbReference type="InterPro" id="IPR036116">
    <property type="entry name" value="FN3_sf"/>
</dbReference>
<dbReference type="InterPro" id="IPR052120">
    <property type="entry name" value="FNDC_type_III_4/5"/>
</dbReference>
<dbReference type="InterPro" id="IPR013783">
    <property type="entry name" value="Ig-like_fold"/>
</dbReference>
<dbReference type="PANTHER" id="PTHR14470">
    <property type="entry name" value="FIBRONECTIN TYPE III DOMAIN-CONTAINING PROTEIN"/>
    <property type="match status" value="1"/>
</dbReference>
<dbReference type="PANTHER" id="PTHR14470:SF1">
    <property type="entry name" value="FIBRONECTIN TYPE III DOMAIN-CONTAINING PROTEIN 5"/>
    <property type="match status" value="1"/>
</dbReference>
<dbReference type="Pfam" id="PF00041">
    <property type="entry name" value="fn3"/>
    <property type="match status" value="1"/>
</dbReference>
<dbReference type="SMART" id="SM00060">
    <property type="entry name" value="FN3"/>
    <property type="match status" value="1"/>
</dbReference>
<dbReference type="SUPFAM" id="SSF49265">
    <property type="entry name" value="Fibronectin type III"/>
    <property type="match status" value="1"/>
</dbReference>
<dbReference type="PROSITE" id="PS50853">
    <property type="entry name" value="FN3"/>
    <property type="match status" value="1"/>
</dbReference>
<keyword id="KW-0877">Alternative promoter usage</keyword>
<keyword id="KW-1003">Cell membrane</keyword>
<keyword id="KW-0325">Glycoprotein</keyword>
<keyword id="KW-0372">Hormone</keyword>
<keyword id="KW-0472">Membrane</keyword>
<keyword id="KW-0576">Peroxisome</keyword>
<keyword id="KW-1185">Reference proteome</keyword>
<keyword id="KW-0964">Secreted</keyword>
<keyword id="KW-0812">Transmembrane</keyword>
<keyword id="KW-1133">Transmembrane helix</keyword>
<reference key="1">
    <citation type="journal article" date="2004" name="Nature">
        <title>Genome sequence of the Brown Norway rat yields insights into mammalian evolution.</title>
        <authorList>
            <person name="Gibbs R.A."/>
            <person name="Weinstock G.M."/>
            <person name="Metzker M.L."/>
            <person name="Muzny D.M."/>
            <person name="Sodergren E.J."/>
            <person name="Scherer S."/>
            <person name="Scott G."/>
            <person name="Steffen D."/>
            <person name="Worley K.C."/>
            <person name="Burch P.E."/>
            <person name="Okwuonu G."/>
            <person name="Hines S."/>
            <person name="Lewis L."/>
            <person name="Deramo C."/>
            <person name="Delgado O."/>
            <person name="Dugan-Rocha S."/>
            <person name="Miner G."/>
            <person name="Morgan M."/>
            <person name="Hawes A."/>
            <person name="Gill R."/>
            <person name="Holt R.A."/>
            <person name="Adams M.D."/>
            <person name="Amanatides P.G."/>
            <person name="Baden-Tillson H."/>
            <person name="Barnstead M."/>
            <person name="Chin S."/>
            <person name="Evans C.A."/>
            <person name="Ferriera S."/>
            <person name="Fosler C."/>
            <person name="Glodek A."/>
            <person name="Gu Z."/>
            <person name="Jennings D."/>
            <person name="Kraft C.L."/>
            <person name="Nguyen T."/>
            <person name="Pfannkoch C.M."/>
            <person name="Sitter C."/>
            <person name="Sutton G.G."/>
            <person name="Venter J.C."/>
            <person name="Woodage T."/>
            <person name="Smith D."/>
            <person name="Lee H.-M."/>
            <person name="Gustafson E."/>
            <person name="Cahill P."/>
            <person name="Kana A."/>
            <person name="Doucette-Stamm L."/>
            <person name="Weinstock K."/>
            <person name="Fechtel K."/>
            <person name="Weiss R.B."/>
            <person name="Dunn D.M."/>
            <person name="Green E.D."/>
            <person name="Blakesley R.W."/>
            <person name="Bouffard G.G."/>
            <person name="De Jong P.J."/>
            <person name="Osoegawa K."/>
            <person name="Zhu B."/>
            <person name="Marra M."/>
            <person name="Schein J."/>
            <person name="Bosdet I."/>
            <person name="Fjell C."/>
            <person name="Jones S."/>
            <person name="Krzywinski M."/>
            <person name="Mathewson C."/>
            <person name="Siddiqui A."/>
            <person name="Wye N."/>
            <person name="McPherson J."/>
            <person name="Zhao S."/>
            <person name="Fraser C.M."/>
            <person name="Shetty J."/>
            <person name="Shatsman S."/>
            <person name="Geer K."/>
            <person name="Chen Y."/>
            <person name="Abramzon S."/>
            <person name="Nierman W.C."/>
            <person name="Havlak P.H."/>
            <person name="Chen R."/>
            <person name="Durbin K.J."/>
            <person name="Egan A."/>
            <person name="Ren Y."/>
            <person name="Song X.-Z."/>
            <person name="Li B."/>
            <person name="Liu Y."/>
            <person name="Qin X."/>
            <person name="Cawley S."/>
            <person name="Cooney A.J."/>
            <person name="D'Souza L.M."/>
            <person name="Martin K."/>
            <person name="Wu J.Q."/>
            <person name="Gonzalez-Garay M.L."/>
            <person name="Jackson A.R."/>
            <person name="Kalafus K.J."/>
            <person name="McLeod M.P."/>
            <person name="Milosavljevic A."/>
            <person name="Virk D."/>
            <person name="Volkov A."/>
            <person name="Wheeler D.A."/>
            <person name="Zhang Z."/>
            <person name="Bailey J.A."/>
            <person name="Eichler E.E."/>
            <person name="Tuzun E."/>
            <person name="Birney E."/>
            <person name="Mongin E."/>
            <person name="Ureta-Vidal A."/>
            <person name="Woodwark C."/>
            <person name="Zdobnov E."/>
            <person name="Bork P."/>
            <person name="Suyama M."/>
            <person name="Torrents D."/>
            <person name="Alexandersson M."/>
            <person name="Trask B.J."/>
            <person name="Young J.M."/>
            <person name="Huang H."/>
            <person name="Wang H."/>
            <person name="Xing H."/>
            <person name="Daniels S."/>
            <person name="Gietzen D."/>
            <person name="Schmidt J."/>
            <person name="Stevens K."/>
            <person name="Vitt U."/>
            <person name="Wingrove J."/>
            <person name="Camara F."/>
            <person name="Mar Alba M."/>
            <person name="Abril J.F."/>
            <person name="Guigo R."/>
            <person name="Smit A."/>
            <person name="Dubchak I."/>
            <person name="Rubin E.M."/>
            <person name="Couronne O."/>
            <person name="Poliakov A."/>
            <person name="Huebner N."/>
            <person name="Ganten D."/>
            <person name="Goesele C."/>
            <person name="Hummel O."/>
            <person name="Kreitler T."/>
            <person name="Lee Y.-A."/>
            <person name="Monti J."/>
            <person name="Schulz H."/>
            <person name="Zimdahl H."/>
            <person name="Himmelbauer H."/>
            <person name="Lehrach H."/>
            <person name="Jacob H.J."/>
            <person name="Bromberg S."/>
            <person name="Gullings-Handley J."/>
            <person name="Jensen-Seaman M.I."/>
            <person name="Kwitek A.E."/>
            <person name="Lazar J."/>
            <person name="Pasko D."/>
            <person name="Tonellato P.J."/>
            <person name="Twigger S."/>
            <person name="Ponting C.P."/>
            <person name="Duarte J.M."/>
            <person name="Rice S."/>
            <person name="Goodstadt L."/>
            <person name="Beatson S.A."/>
            <person name="Emes R.D."/>
            <person name="Winter E.E."/>
            <person name="Webber C."/>
            <person name="Brandt P."/>
            <person name="Nyakatura G."/>
            <person name="Adetobi M."/>
            <person name="Chiaromonte F."/>
            <person name="Elnitski L."/>
            <person name="Eswara P."/>
            <person name="Hardison R.C."/>
            <person name="Hou M."/>
            <person name="Kolbe D."/>
            <person name="Makova K."/>
            <person name="Miller W."/>
            <person name="Nekrutenko A."/>
            <person name="Riemer C."/>
            <person name="Schwartz S."/>
            <person name="Taylor J."/>
            <person name="Yang S."/>
            <person name="Zhang Y."/>
            <person name="Lindpaintner K."/>
            <person name="Andrews T.D."/>
            <person name="Caccamo M."/>
            <person name="Clamp M."/>
            <person name="Clarke L."/>
            <person name="Curwen V."/>
            <person name="Durbin R.M."/>
            <person name="Eyras E."/>
            <person name="Searle S.M."/>
            <person name="Cooper G.M."/>
            <person name="Batzoglou S."/>
            <person name="Brudno M."/>
            <person name="Sidow A."/>
            <person name="Stone E.A."/>
            <person name="Payseur B.A."/>
            <person name="Bourque G."/>
            <person name="Lopez-Otin C."/>
            <person name="Puente X.S."/>
            <person name="Chakrabarti K."/>
            <person name="Chatterji S."/>
            <person name="Dewey C."/>
            <person name="Pachter L."/>
            <person name="Bray N."/>
            <person name="Yap V.B."/>
            <person name="Caspi A."/>
            <person name="Tesler G."/>
            <person name="Pevzner P.A."/>
            <person name="Haussler D."/>
            <person name="Roskin K.M."/>
            <person name="Baertsch R."/>
            <person name="Clawson H."/>
            <person name="Furey T.S."/>
            <person name="Hinrichs A.S."/>
            <person name="Karolchik D."/>
            <person name="Kent W.J."/>
            <person name="Rosenbloom K.R."/>
            <person name="Trumbower H."/>
            <person name="Weirauch M."/>
            <person name="Cooper D.N."/>
            <person name="Stenson P.D."/>
            <person name="Ma B."/>
            <person name="Brent M."/>
            <person name="Arumugam M."/>
            <person name="Shteynberg D."/>
            <person name="Copley R.R."/>
            <person name="Taylor M.S."/>
            <person name="Riethman H."/>
            <person name="Mudunuri U."/>
            <person name="Peterson J."/>
            <person name="Guyer M."/>
            <person name="Felsenfeld A."/>
            <person name="Old S."/>
            <person name="Mockrin S."/>
            <person name="Collins F.S."/>
        </authorList>
    </citation>
    <scope>NUCLEOTIDE SEQUENCE [LARGE SCALE GENOMIC DNA]</scope>
    <source>
        <strain>Brown Norway</strain>
    </source>
</reference>
<reference key="2">
    <citation type="submission" date="2002-07" db="EMBL/GenBank/DDBJ databases">
        <authorList>
            <person name="Desai B.J."/>
            <person name="McKinney K.Q."/>
            <person name="Meyer M.H."/>
            <person name="Bahrani-Mostafavi Z."/>
            <person name="Meyer R.A. Jr."/>
        </authorList>
    </citation>
    <scope>NUCLEOTIDE SEQUENCE [MRNA] OF 59-240</scope>
    <source>
        <strain>Sprague-Dawley</strain>
        <tissue>Brain</tissue>
    </source>
</reference>
<gene>
    <name type="primary">Fndc5</name>
</gene>
<organism>
    <name type="scientific">Rattus norvegicus</name>
    <name type="common">Rat</name>
    <dbReference type="NCBI Taxonomy" id="10116"/>
    <lineage>
        <taxon>Eukaryota</taxon>
        <taxon>Metazoa</taxon>
        <taxon>Chordata</taxon>
        <taxon>Craniata</taxon>
        <taxon>Vertebrata</taxon>
        <taxon>Euteleostomi</taxon>
        <taxon>Mammalia</taxon>
        <taxon>Eutheria</taxon>
        <taxon>Euarchontoglires</taxon>
        <taxon>Glires</taxon>
        <taxon>Rodentia</taxon>
        <taxon>Myomorpha</taxon>
        <taxon>Muroidea</taxon>
        <taxon>Muridae</taxon>
        <taxon>Murinae</taxon>
        <taxon>Rattus</taxon>
    </lineage>
</organism>
<protein>
    <recommendedName>
        <fullName>Fibronectin type III domain-containing protein 5</fullName>
    </recommendedName>
    <component>
        <recommendedName>
            <fullName>Irisin</fullName>
        </recommendedName>
    </component>
</protein>
<evidence type="ECO:0000250" key="1">
    <source>
        <dbReference type="UniProtKB" id="Q8K4Z2"/>
    </source>
</evidence>
<evidence type="ECO:0000250" key="2">
    <source>
        <dbReference type="UniProtKB" id="Q8NAU1"/>
    </source>
</evidence>
<evidence type="ECO:0000255" key="3"/>
<evidence type="ECO:0000255" key="4">
    <source>
        <dbReference type="PROSITE-ProRule" id="PRU00316"/>
    </source>
</evidence>
<evidence type="ECO:0000256" key="5">
    <source>
        <dbReference type="SAM" id="MobiDB-lite"/>
    </source>
</evidence>
<evidence type="ECO:0000305" key="6"/>